<feature type="chain" id="PRO_1000072819" description="Met repressor">
    <location>
        <begin position="1"/>
        <end position="105"/>
    </location>
</feature>
<organism>
    <name type="scientific">Vibrio cholerae serotype O1 (strain ATCC 39541 / Classical Ogawa 395 / O395)</name>
    <dbReference type="NCBI Taxonomy" id="345073"/>
    <lineage>
        <taxon>Bacteria</taxon>
        <taxon>Pseudomonadati</taxon>
        <taxon>Pseudomonadota</taxon>
        <taxon>Gammaproteobacteria</taxon>
        <taxon>Vibrionales</taxon>
        <taxon>Vibrionaceae</taxon>
        <taxon>Vibrio</taxon>
    </lineage>
</organism>
<sequence>MADWNGEYISPYAEHGKKSELVKKITVSIPLKVLKVLTDERTRRQVNNLRHATNSELLCEAFLHAYTGQPLPTDEDLRKDRPDDIPAEAKRLMTEMGIEFESYDE</sequence>
<reference key="1">
    <citation type="submission" date="2007-03" db="EMBL/GenBank/DDBJ databases">
        <authorList>
            <person name="Heidelberg J."/>
        </authorList>
    </citation>
    <scope>NUCLEOTIDE SEQUENCE [LARGE SCALE GENOMIC DNA]</scope>
    <source>
        <strain>ATCC 39541 / Classical Ogawa 395 / O395</strain>
    </source>
</reference>
<reference key="2">
    <citation type="journal article" date="2008" name="PLoS ONE">
        <title>A recalibrated molecular clock and independent origins for the cholera pandemic clones.</title>
        <authorList>
            <person name="Feng L."/>
            <person name="Reeves P.R."/>
            <person name="Lan R."/>
            <person name="Ren Y."/>
            <person name="Gao C."/>
            <person name="Zhou Z."/>
            <person name="Ren Y."/>
            <person name="Cheng J."/>
            <person name="Wang W."/>
            <person name="Wang J."/>
            <person name="Qian W."/>
            <person name="Li D."/>
            <person name="Wang L."/>
        </authorList>
    </citation>
    <scope>NUCLEOTIDE SEQUENCE [LARGE SCALE GENOMIC DNA]</scope>
    <source>
        <strain>ATCC 39541 / Classical Ogawa 395 / O395</strain>
    </source>
</reference>
<accession>A5F4W0</accession>
<accession>C3LXT0</accession>
<proteinExistence type="inferred from homology"/>
<comment type="function">
    <text evidence="1">This regulatory protein, when combined with SAM (S-adenosylmethionine) represses the expression of the methionine regulon and of enzymes involved in SAM synthesis.</text>
</comment>
<comment type="subunit">
    <text evidence="1">Homodimer.</text>
</comment>
<comment type="subcellular location">
    <subcellularLocation>
        <location evidence="1">Cytoplasm</location>
    </subcellularLocation>
</comment>
<comment type="domain">
    <text>Does not bind DNA by a helix-turn-helix motif.</text>
</comment>
<comment type="similarity">
    <text evidence="1">Belongs to the MetJ family.</text>
</comment>
<dbReference type="EMBL" id="CP000627">
    <property type="protein sequence ID" value="ABQ20804.1"/>
    <property type="molecule type" value="Genomic_DNA"/>
</dbReference>
<dbReference type="EMBL" id="CP001235">
    <property type="protein sequence ID" value="ACP10780.1"/>
    <property type="molecule type" value="Genomic_DNA"/>
</dbReference>
<dbReference type="RefSeq" id="WP_000796267.1">
    <property type="nucleotide sequence ID" value="NZ_JAACZH010000007.1"/>
</dbReference>
<dbReference type="SMR" id="A5F4W0"/>
<dbReference type="GeneID" id="94012672"/>
<dbReference type="KEGG" id="vco:VC0395_A2255"/>
<dbReference type="KEGG" id="vcr:VC395_2795"/>
<dbReference type="PATRIC" id="fig|345073.21.peg.2693"/>
<dbReference type="eggNOG" id="COG3060">
    <property type="taxonomic scope" value="Bacteria"/>
</dbReference>
<dbReference type="HOGENOM" id="CLU_142318_0_0_6"/>
<dbReference type="OrthoDB" id="5680896at2"/>
<dbReference type="Proteomes" id="UP000000249">
    <property type="component" value="Chromosome 2"/>
</dbReference>
<dbReference type="GO" id="GO:0005737">
    <property type="term" value="C:cytoplasm"/>
    <property type="evidence" value="ECO:0007669"/>
    <property type="project" value="UniProtKB-SubCell"/>
</dbReference>
<dbReference type="GO" id="GO:0003677">
    <property type="term" value="F:DNA binding"/>
    <property type="evidence" value="ECO:0007669"/>
    <property type="project" value="UniProtKB-KW"/>
</dbReference>
<dbReference type="GO" id="GO:0003700">
    <property type="term" value="F:DNA-binding transcription factor activity"/>
    <property type="evidence" value="ECO:0007669"/>
    <property type="project" value="InterPro"/>
</dbReference>
<dbReference type="GO" id="GO:0009086">
    <property type="term" value="P:methionine biosynthetic process"/>
    <property type="evidence" value="ECO:0007669"/>
    <property type="project" value="UniProtKB-UniRule"/>
</dbReference>
<dbReference type="GO" id="GO:0045892">
    <property type="term" value="P:negative regulation of DNA-templated transcription"/>
    <property type="evidence" value="ECO:0007669"/>
    <property type="project" value="UniProtKB-UniRule"/>
</dbReference>
<dbReference type="CDD" id="cd00490">
    <property type="entry name" value="Met_repressor_MetJ"/>
    <property type="match status" value="1"/>
</dbReference>
<dbReference type="FunFam" id="1.10.140.10:FF:000001">
    <property type="entry name" value="Met repressor"/>
    <property type="match status" value="1"/>
</dbReference>
<dbReference type="Gene3D" id="1.10.140.10">
    <property type="entry name" value="MET Apo-Repressor, subunit A"/>
    <property type="match status" value="1"/>
</dbReference>
<dbReference type="HAMAP" id="MF_00744">
    <property type="entry name" value="MetJ"/>
    <property type="match status" value="1"/>
</dbReference>
<dbReference type="InterPro" id="IPR002084">
    <property type="entry name" value="Met_repressor_MetJ"/>
</dbReference>
<dbReference type="InterPro" id="IPR023453">
    <property type="entry name" value="Met_repressor_MetJ_dom_sf"/>
</dbReference>
<dbReference type="InterPro" id="IPR010985">
    <property type="entry name" value="Ribbon_hlx_hlx"/>
</dbReference>
<dbReference type="NCBIfam" id="NF003622">
    <property type="entry name" value="PRK05264.1"/>
    <property type="match status" value="1"/>
</dbReference>
<dbReference type="Pfam" id="PF01340">
    <property type="entry name" value="MetJ"/>
    <property type="match status" value="1"/>
</dbReference>
<dbReference type="SUPFAM" id="SSF47598">
    <property type="entry name" value="Ribbon-helix-helix"/>
    <property type="match status" value="1"/>
</dbReference>
<protein>
    <recommendedName>
        <fullName evidence="1">Met repressor</fullName>
    </recommendedName>
    <alternativeName>
        <fullName evidence="1">Met regulon regulatory protein MetJ</fullName>
    </alternativeName>
</protein>
<keyword id="KW-0028">Amino-acid biosynthesis</keyword>
<keyword id="KW-0963">Cytoplasm</keyword>
<keyword id="KW-0238">DNA-binding</keyword>
<keyword id="KW-0486">Methionine biosynthesis</keyword>
<keyword id="KW-0678">Repressor</keyword>
<keyword id="KW-0804">Transcription</keyword>
<keyword id="KW-0805">Transcription regulation</keyword>
<evidence type="ECO:0000255" key="1">
    <source>
        <dbReference type="HAMAP-Rule" id="MF_00744"/>
    </source>
</evidence>
<name>METJ_VIBC3</name>
<gene>
    <name evidence="1" type="primary">metJ</name>
    <name type="ordered locus">VC0395_A2255</name>
    <name type="ordered locus">VC395_2795</name>
</gene>